<sequence length="361" mass="40761">MKRVSRRAFLRRLGVGVAATAAFSPLAVAQARRYRWRIQTAWDAGTVGYSLFQKFTERVKELTDGQLEVQPFPAGAVVGTFDMFDAVKTGVLDGMNPFTLYWAGRMPVTAFLSSYALGLDRPDQWETWFYSLGGLDIARRAFAEQGLFYVGPVQHDLNIIHSKKPIRRFEDFKGVKLRVPGGMIAEVFAAAGASTVLLPGGEVYPALERGVIDAADFVGPAVNYNLGFHQVAKYIIMGPPETPAIHQPVDLMDFTINLNRWRSLPKPLQERFIAAVHEYSWIHYAGIQKANLEAWPKYRQAGVEVIRLSNEDVRKFRRLAIPIWFKWAKMDKYSREAFASQLEYMKGIGYVTDEELKGLSL</sequence>
<dbReference type="EMBL" id="AP008226">
    <property type="protein sequence ID" value="BAD70589.1"/>
    <property type="molecule type" value="Genomic_DNA"/>
</dbReference>
<dbReference type="RefSeq" id="YP_144032.1">
    <property type="nucleotide sequence ID" value="NC_006461.1"/>
</dbReference>
<dbReference type="PDB" id="2ZZV">
    <property type="method" value="X-ray"/>
    <property type="resolution" value="1.40 A"/>
    <property type="chains" value="A/B=1-361"/>
</dbReference>
<dbReference type="PDB" id="2ZZW">
    <property type="method" value="X-ray"/>
    <property type="resolution" value="1.95 A"/>
    <property type="chains" value="A/B=1-361"/>
</dbReference>
<dbReference type="PDB" id="2ZZX">
    <property type="method" value="X-ray"/>
    <property type="resolution" value="1.75 A"/>
    <property type="chains" value="A/B/C/D=1-361"/>
</dbReference>
<dbReference type="PDBsum" id="2ZZV"/>
<dbReference type="PDBsum" id="2ZZW"/>
<dbReference type="PDBsum" id="2ZZX"/>
<dbReference type="SMR" id="Q5SK82"/>
<dbReference type="EnsemblBacteria" id="BAD70589">
    <property type="protein sequence ID" value="BAD70589"/>
    <property type="gene ID" value="BAD70589"/>
</dbReference>
<dbReference type="GeneID" id="3168757"/>
<dbReference type="KEGG" id="ttj:TTHA0766"/>
<dbReference type="PATRIC" id="fig|300852.9.peg.759"/>
<dbReference type="eggNOG" id="COG4663">
    <property type="taxonomic scope" value="Bacteria"/>
</dbReference>
<dbReference type="HOGENOM" id="CLU_036176_0_0_0"/>
<dbReference type="PhylomeDB" id="Q5SK82"/>
<dbReference type="EvolutionaryTrace" id="Q5SK82"/>
<dbReference type="Proteomes" id="UP000000532">
    <property type="component" value="Chromosome"/>
</dbReference>
<dbReference type="GO" id="GO:0042597">
    <property type="term" value="C:periplasmic space"/>
    <property type="evidence" value="ECO:0007669"/>
    <property type="project" value="UniProtKB-SubCell"/>
</dbReference>
<dbReference type="GO" id="GO:0031317">
    <property type="term" value="C:tripartite ATP-independent periplasmic transporter complex"/>
    <property type="evidence" value="ECO:0000317"/>
    <property type="project" value="UniProtKB"/>
</dbReference>
<dbReference type="GO" id="GO:0005509">
    <property type="term" value="F:calcium ion binding"/>
    <property type="evidence" value="ECO:0000314"/>
    <property type="project" value="UniProtKB"/>
</dbReference>
<dbReference type="GO" id="GO:0042803">
    <property type="term" value="F:protein homodimerization activity"/>
    <property type="evidence" value="ECO:0000314"/>
    <property type="project" value="UniProtKB"/>
</dbReference>
<dbReference type="GO" id="GO:0008270">
    <property type="term" value="F:zinc ion binding"/>
    <property type="evidence" value="ECO:0000314"/>
    <property type="project" value="UniProtKB"/>
</dbReference>
<dbReference type="GO" id="GO:0015727">
    <property type="term" value="P:lactate transport"/>
    <property type="evidence" value="ECO:0000314"/>
    <property type="project" value="UniProtKB"/>
</dbReference>
<dbReference type="GO" id="GO:0055085">
    <property type="term" value="P:transmembrane transport"/>
    <property type="evidence" value="ECO:0007669"/>
    <property type="project" value="InterPro"/>
</dbReference>
<dbReference type="CDD" id="cd13681">
    <property type="entry name" value="PBP2_TRAP_lactate"/>
    <property type="match status" value="1"/>
</dbReference>
<dbReference type="FunFam" id="3.40.190.170:FF:000003">
    <property type="entry name" value="Lactate-binding periplasmic protein TTHA0766"/>
    <property type="match status" value="1"/>
</dbReference>
<dbReference type="Gene3D" id="3.40.190.170">
    <property type="entry name" value="Bacterial extracellular solute-binding protein, family 7"/>
    <property type="match status" value="1"/>
</dbReference>
<dbReference type="InterPro" id="IPR018389">
    <property type="entry name" value="DctP_fam"/>
</dbReference>
<dbReference type="InterPro" id="IPR026289">
    <property type="entry name" value="SBP_TakP-like"/>
</dbReference>
<dbReference type="InterPro" id="IPR006311">
    <property type="entry name" value="TAT_signal"/>
</dbReference>
<dbReference type="InterPro" id="IPR038404">
    <property type="entry name" value="TRAP_DctP_sf"/>
</dbReference>
<dbReference type="InterPro" id="IPR041721">
    <property type="entry name" value="TTHA0766"/>
</dbReference>
<dbReference type="NCBIfam" id="NF037995">
    <property type="entry name" value="TRAP_S1"/>
    <property type="match status" value="1"/>
</dbReference>
<dbReference type="PANTHER" id="PTHR33376">
    <property type="match status" value="1"/>
</dbReference>
<dbReference type="PANTHER" id="PTHR33376:SF5">
    <property type="entry name" value="EXTRACYTOPLASMIC SOLUTE RECEPTOR PROTEIN"/>
    <property type="match status" value="1"/>
</dbReference>
<dbReference type="Pfam" id="PF03480">
    <property type="entry name" value="DctP"/>
    <property type="match status" value="1"/>
</dbReference>
<dbReference type="PIRSF" id="PIRSF039026">
    <property type="entry name" value="SiaP"/>
    <property type="match status" value="1"/>
</dbReference>
<dbReference type="PROSITE" id="PS51318">
    <property type="entry name" value="TAT"/>
    <property type="match status" value="1"/>
</dbReference>
<keyword id="KW-0002">3D-structure</keyword>
<keyword id="KW-0106">Calcium</keyword>
<keyword id="KW-0903">Direct protein sequencing</keyword>
<keyword id="KW-0479">Metal-binding</keyword>
<keyword id="KW-0574">Periplasm</keyword>
<keyword id="KW-1185">Reference proteome</keyword>
<keyword id="KW-0732">Signal</keyword>
<keyword id="KW-0813">Transport</keyword>
<proteinExistence type="evidence at protein level"/>
<accession>Q5SK82</accession>
<reference evidence="8" key="1">
    <citation type="submission" date="2004-11" db="EMBL/GenBank/DDBJ databases">
        <title>Complete genome sequence of Thermus thermophilus HB8.</title>
        <authorList>
            <person name="Masui R."/>
            <person name="Kurokawa K."/>
            <person name="Nakagawa N."/>
            <person name="Tokunaga F."/>
            <person name="Koyama Y."/>
            <person name="Shibata T."/>
            <person name="Oshima T."/>
            <person name="Yokoyama S."/>
            <person name="Yasunaga T."/>
            <person name="Kuramitsu S."/>
        </authorList>
    </citation>
    <scope>NUCLEOTIDE SEQUENCE [LARGE SCALE GENOMIC DNA]</scope>
    <source>
        <strain>ATCC 27634 / DSM 579 / HB8</strain>
    </source>
</reference>
<reference evidence="7 9" key="2">
    <citation type="journal article" date="2009" name="J. Mol. Biol.">
        <title>Crystal structure of a periplasmic substrate-binding protein in complex with calcium lactate.</title>
        <authorList>
            <person name="Akiyama N."/>
            <person name="Takeda K."/>
            <person name="Miki K."/>
        </authorList>
    </citation>
    <scope>PROTEIN SEQUENCE OF 23-32</scope>
    <scope>X-RAY CRYSTALLOGRAPHY (1.40 ANGSTROMS) IN COMPLEXES WITH CALCIUM; LACTATE AND ZINC</scope>
    <scope>FUNCTION</scope>
    <scope>SUBUNIT</scope>
    <source>
        <strain evidence="5">ATCC 27634 / DSM 579 / HB8</strain>
    </source>
</reference>
<protein>
    <recommendedName>
        <fullName evidence="6">Lactate-binding periplasmic protein TTHA0766</fullName>
    </recommendedName>
    <alternativeName>
        <fullName evidence="8">ABC transporter, solute-binding protein</fullName>
    </alternativeName>
    <alternativeName>
        <fullName evidence="1">Extracytoplasmic solute receptor protein TTHA0766</fullName>
    </alternativeName>
    <alternativeName>
        <fullName evidence="2">TRAP transporter lactate-binding subunit P</fullName>
    </alternativeName>
</protein>
<gene>
    <name type="ordered locus">TTHA0766</name>
</gene>
<comment type="function">
    <text evidence="1 5">Part of the tripartite ATP-independent periplasmic (TRAP) transport system involved in the uptake of lactate. This protein specifically binds L-lactate.</text>
</comment>
<comment type="subunit">
    <text evidence="1 5 6">Homodimer. The complex comprises the extracytoplasmic solute receptor protein TTHA0766, and the two putative transmembrane proteins TTHA0767 and TTHA0768.</text>
</comment>
<comment type="subcellular location">
    <subcellularLocation>
        <location evidence="1">Periplasm</location>
    </subcellularLocation>
</comment>
<comment type="similarity">
    <text evidence="3">Belongs to the bacterial solute-binding protein 7 family.</text>
</comment>
<evidence type="ECO:0000250" key="1">
    <source>
        <dbReference type="UniProtKB" id="P37676"/>
    </source>
</evidence>
<evidence type="ECO:0000250" key="2">
    <source>
        <dbReference type="UniProtKB" id="Q3J1R2"/>
    </source>
</evidence>
<evidence type="ECO:0000255" key="3"/>
<evidence type="ECO:0000255" key="4">
    <source>
        <dbReference type="PROSITE-ProRule" id="PRU00648"/>
    </source>
</evidence>
<evidence type="ECO:0000269" key="5">
    <source>
    </source>
</evidence>
<evidence type="ECO:0000303" key="6">
    <source>
    </source>
</evidence>
<evidence type="ECO:0000305" key="7"/>
<evidence type="ECO:0000312" key="8">
    <source>
        <dbReference type="EMBL" id="BAD70589.1"/>
    </source>
</evidence>
<evidence type="ECO:0000312" key="9">
    <source>
        <dbReference type="PDB" id="2ZZW"/>
    </source>
</evidence>
<evidence type="ECO:0007829" key="10">
    <source>
        <dbReference type="PDB" id="2ZZV"/>
    </source>
</evidence>
<organism>
    <name type="scientific">Thermus thermophilus (strain ATCC 27634 / DSM 579 / HB8)</name>
    <dbReference type="NCBI Taxonomy" id="300852"/>
    <lineage>
        <taxon>Bacteria</taxon>
        <taxon>Thermotogati</taxon>
        <taxon>Deinococcota</taxon>
        <taxon>Deinococci</taxon>
        <taxon>Thermales</taxon>
        <taxon>Thermaceae</taxon>
        <taxon>Thermus</taxon>
    </lineage>
</organism>
<name>TLBP_THET8</name>
<feature type="signal peptide" description="Tat-type signal" evidence="4 5">
    <location>
        <begin position="1"/>
        <end position="22"/>
    </location>
</feature>
<feature type="chain" id="PRO_0000423944" description="Lactate-binding periplasmic protein TTHA0766" evidence="4 5">
    <location>
        <begin position="23"/>
        <end position="361"/>
    </location>
</feature>
<feature type="binding site" evidence="5">
    <location>
        <position position="101"/>
    </location>
    <ligand>
        <name>substrate</name>
    </ligand>
</feature>
<feature type="binding site" evidence="5">
    <location>
        <position position="158"/>
    </location>
    <ligand>
        <name>Ca(2+)</name>
        <dbReference type="ChEBI" id="CHEBI:29108"/>
    </ligand>
</feature>
<feature type="binding site" evidence="5">
    <location>
        <position position="158"/>
    </location>
    <ligand>
        <name>substrate</name>
    </ligand>
</feature>
<feature type="binding site" evidence="5">
    <location>
        <position position="178"/>
    </location>
    <ligand>
        <name>substrate</name>
    </ligand>
</feature>
<feature type="binding site" evidence="5">
    <location>
        <position position="216"/>
    </location>
    <ligand>
        <name>Ca(2+)</name>
        <dbReference type="ChEBI" id="CHEBI:29108"/>
    </ligand>
</feature>
<feature type="binding site" evidence="5">
    <location>
        <position position="217"/>
    </location>
    <ligand>
        <name>Ca(2+)</name>
        <dbReference type="ChEBI" id="CHEBI:29108"/>
    </ligand>
</feature>
<feature type="binding site" evidence="5">
    <location>
        <position position="217"/>
    </location>
    <ligand>
        <name>substrate</name>
    </ligand>
</feature>
<feature type="binding site" evidence="5">
    <location>
        <begin position="247"/>
        <end position="250"/>
    </location>
    <ligand>
        <name>substrate</name>
    </ligand>
</feature>
<feature type="binding site" evidence="5">
    <location>
        <position position="247"/>
    </location>
    <ligand>
        <name>Ca(2+)</name>
        <dbReference type="ChEBI" id="CHEBI:29108"/>
    </ligand>
</feature>
<feature type="strand" evidence="10">
    <location>
        <begin position="34"/>
        <end position="42"/>
    </location>
</feature>
<feature type="helix" evidence="10">
    <location>
        <begin position="47"/>
        <end position="62"/>
    </location>
</feature>
<feature type="turn" evidence="10">
    <location>
        <begin position="63"/>
        <end position="65"/>
    </location>
</feature>
<feature type="strand" evidence="10">
    <location>
        <begin position="66"/>
        <end position="72"/>
    </location>
</feature>
<feature type="strand" evidence="10">
    <location>
        <begin position="76"/>
        <end position="78"/>
    </location>
</feature>
<feature type="helix" evidence="10">
    <location>
        <begin position="80"/>
        <end position="82"/>
    </location>
</feature>
<feature type="helix" evidence="10">
    <location>
        <begin position="83"/>
        <end position="88"/>
    </location>
</feature>
<feature type="strand" evidence="10">
    <location>
        <begin position="91"/>
        <end position="96"/>
    </location>
</feature>
<feature type="helix" evidence="10">
    <location>
        <begin position="99"/>
        <end position="102"/>
    </location>
</feature>
<feature type="turn" evidence="10">
    <location>
        <begin position="103"/>
        <end position="105"/>
    </location>
</feature>
<feature type="helix" evidence="10">
    <location>
        <begin position="107"/>
        <end position="111"/>
    </location>
</feature>
<feature type="helix" evidence="10">
    <location>
        <begin position="122"/>
        <end position="130"/>
    </location>
</feature>
<feature type="helix" evidence="10">
    <location>
        <begin position="134"/>
        <end position="144"/>
    </location>
</feature>
<feature type="strand" evidence="10">
    <location>
        <begin position="147"/>
        <end position="153"/>
    </location>
</feature>
<feature type="strand" evidence="10">
    <location>
        <begin position="160"/>
        <end position="164"/>
    </location>
</feature>
<feature type="helix" evidence="10">
    <location>
        <begin position="169"/>
        <end position="172"/>
    </location>
</feature>
<feature type="strand" evidence="10">
    <location>
        <begin position="176"/>
        <end position="178"/>
    </location>
</feature>
<feature type="helix" evidence="10">
    <location>
        <begin position="182"/>
        <end position="190"/>
    </location>
</feature>
<feature type="strand" evidence="10">
    <location>
        <begin position="194"/>
        <end position="196"/>
    </location>
</feature>
<feature type="helix" evidence="10">
    <location>
        <begin position="200"/>
        <end position="202"/>
    </location>
</feature>
<feature type="helix" evidence="10">
    <location>
        <begin position="203"/>
        <end position="208"/>
    </location>
</feature>
<feature type="strand" evidence="10">
    <location>
        <begin position="213"/>
        <end position="216"/>
    </location>
</feature>
<feature type="helix" evidence="10">
    <location>
        <begin position="220"/>
        <end position="225"/>
    </location>
</feature>
<feature type="helix" evidence="10">
    <location>
        <begin position="228"/>
        <end position="231"/>
    </location>
</feature>
<feature type="strand" evidence="10">
    <location>
        <begin position="233"/>
        <end position="237"/>
    </location>
</feature>
<feature type="strand" evidence="10">
    <location>
        <begin position="252"/>
        <end position="257"/>
    </location>
</feature>
<feature type="helix" evidence="10">
    <location>
        <begin position="258"/>
        <end position="263"/>
    </location>
</feature>
<feature type="helix" evidence="10">
    <location>
        <begin position="266"/>
        <end position="300"/>
    </location>
</feature>
<feature type="strand" evidence="10">
    <location>
        <begin position="304"/>
        <end position="307"/>
    </location>
</feature>
<feature type="helix" evidence="10">
    <location>
        <begin position="310"/>
        <end position="328"/>
    </location>
</feature>
<feature type="helix" evidence="10">
    <location>
        <begin position="332"/>
        <end position="347"/>
    </location>
</feature>
<feature type="helix" evidence="10">
    <location>
        <begin position="354"/>
        <end position="356"/>
    </location>
</feature>